<name>AROE_HELP2</name>
<sequence length="263" mass="29205">MKLKSFGVFGNPIKHSKSPLIHNACFLTFQKKLGFLGHYHPILLPLESHIKNEFLHLGLSGANVTLPFKERAFQICDKIKGIALECGAVNTLVLENDELVGYNTDALGFYLSLKQKNYQNALILGSGGSAKALACELKKQGLEVSVLNRSARGLDFFQRLGCDCFMEPPKSAFDLIINATSASLNNELPLNKEVLKGYFKEGQLAYDLAYGFLTPFLSLAKELEIPFQDGKDMLIYQAALSFEKFSASQIPYSKAFEVMRSVF</sequence>
<reference key="1">
    <citation type="submission" date="2008-10" db="EMBL/GenBank/DDBJ databases">
        <title>The complete genome sequence of Helicobacter pylori strain P12.</title>
        <authorList>
            <person name="Fischer W."/>
            <person name="Windhager L."/>
            <person name="Karnholz A."/>
            <person name="Zeiller M."/>
            <person name="Zimmer R."/>
            <person name="Haas R."/>
        </authorList>
    </citation>
    <scope>NUCLEOTIDE SEQUENCE [LARGE SCALE GENOMIC DNA]</scope>
    <source>
        <strain>P12</strain>
    </source>
</reference>
<gene>
    <name evidence="1" type="primary">aroE</name>
    <name type="ordered locus">HPP12_1215</name>
</gene>
<keyword id="KW-0028">Amino-acid biosynthesis</keyword>
<keyword id="KW-0057">Aromatic amino acid biosynthesis</keyword>
<keyword id="KW-0521">NADP</keyword>
<keyword id="KW-0560">Oxidoreductase</keyword>
<dbReference type="EC" id="1.1.1.25" evidence="1"/>
<dbReference type="EMBL" id="CP001217">
    <property type="protein sequence ID" value="ACJ08367.1"/>
    <property type="molecule type" value="Genomic_DNA"/>
</dbReference>
<dbReference type="SMR" id="B6JN89"/>
<dbReference type="KEGG" id="hpp:HPP12_1215"/>
<dbReference type="HOGENOM" id="CLU_044063_2_0_7"/>
<dbReference type="UniPathway" id="UPA00053">
    <property type="reaction ID" value="UER00087"/>
</dbReference>
<dbReference type="Proteomes" id="UP000008198">
    <property type="component" value="Chromosome"/>
</dbReference>
<dbReference type="GO" id="GO:0005829">
    <property type="term" value="C:cytosol"/>
    <property type="evidence" value="ECO:0007669"/>
    <property type="project" value="TreeGrafter"/>
</dbReference>
<dbReference type="GO" id="GO:0050661">
    <property type="term" value="F:NADP binding"/>
    <property type="evidence" value="ECO:0007669"/>
    <property type="project" value="InterPro"/>
</dbReference>
<dbReference type="GO" id="GO:0004764">
    <property type="term" value="F:shikimate 3-dehydrogenase (NADP+) activity"/>
    <property type="evidence" value="ECO:0007669"/>
    <property type="project" value="UniProtKB-UniRule"/>
</dbReference>
<dbReference type="GO" id="GO:0008652">
    <property type="term" value="P:amino acid biosynthetic process"/>
    <property type="evidence" value="ECO:0007669"/>
    <property type="project" value="UniProtKB-KW"/>
</dbReference>
<dbReference type="GO" id="GO:0009073">
    <property type="term" value="P:aromatic amino acid family biosynthetic process"/>
    <property type="evidence" value="ECO:0007669"/>
    <property type="project" value="UniProtKB-KW"/>
</dbReference>
<dbReference type="GO" id="GO:0009423">
    <property type="term" value="P:chorismate biosynthetic process"/>
    <property type="evidence" value="ECO:0007669"/>
    <property type="project" value="UniProtKB-UniRule"/>
</dbReference>
<dbReference type="GO" id="GO:0019632">
    <property type="term" value="P:shikimate metabolic process"/>
    <property type="evidence" value="ECO:0007669"/>
    <property type="project" value="InterPro"/>
</dbReference>
<dbReference type="CDD" id="cd01065">
    <property type="entry name" value="NAD_bind_Shikimate_DH"/>
    <property type="match status" value="1"/>
</dbReference>
<dbReference type="FunFam" id="3.40.50.10860:FF:000025">
    <property type="entry name" value="Shikimate dehydrogenase (NADP(+))"/>
    <property type="match status" value="1"/>
</dbReference>
<dbReference type="FunFam" id="3.40.50.720:FF:000665">
    <property type="entry name" value="Shikimate dehydrogenase (NADP(+))"/>
    <property type="match status" value="1"/>
</dbReference>
<dbReference type="Gene3D" id="3.40.50.10860">
    <property type="entry name" value="Leucine Dehydrogenase, chain A, domain 1"/>
    <property type="match status" value="1"/>
</dbReference>
<dbReference type="Gene3D" id="3.40.50.720">
    <property type="entry name" value="NAD(P)-binding Rossmann-like Domain"/>
    <property type="match status" value="1"/>
</dbReference>
<dbReference type="HAMAP" id="MF_00222">
    <property type="entry name" value="Shikimate_DH_AroE"/>
    <property type="match status" value="1"/>
</dbReference>
<dbReference type="InterPro" id="IPR046346">
    <property type="entry name" value="Aminoacid_DH-like_N_sf"/>
</dbReference>
<dbReference type="InterPro" id="IPR036291">
    <property type="entry name" value="NAD(P)-bd_dom_sf"/>
</dbReference>
<dbReference type="InterPro" id="IPR011342">
    <property type="entry name" value="Shikimate_DH"/>
</dbReference>
<dbReference type="InterPro" id="IPR013708">
    <property type="entry name" value="Shikimate_DH-bd_N"/>
</dbReference>
<dbReference type="InterPro" id="IPR022893">
    <property type="entry name" value="Shikimate_DH_fam"/>
</dbReference>
<dbReference type="NCBIfam" id="TIGR00507">
    <property type="entry name" value="aroE"/>
    <property type="match status" value="1"/>
</dbReference>
<dbReference type="NCBIfam" id="NF001316">
    <property type="entry name" value="PRK00258.2-5"/>
    <property type="match status" value="1"/>
</dbReference>
<dbReference type="PANTHER" id="PTHR21089:SF1">
    <property type="entry name" value="BIFUNCTIONAL 3-DEHYDROQUINATE DEHYDRATASE_SHIKIMATE DEHYDROGENASE, CHLOROPLASTIC"/>
    <property type="match status" value="1"/>
</dbReference>
<dbReference type="PANTHER" id="PTHR21089">
    <property type="entry name" value="SHIKIMATE DEHYDROGENASE"/>
    <property type="match status" value="1"/>
</dbReference>
<dbReference type="Pfam" id="PF08501">
    <property type="entry name" value="Shikimate_dh_N"/>
    <property type="match status" value="1"/>
</dbReference>
<dbReference type="SUPFAM" id="SSF53223">
    <property type="entry name" value="Aminoacid dehydrogenase-like, N-terminal domain"/>
    <property type="match status" value="1"/>
</dbReference>
<dbReference type="SUPFAM" id="SSF51735">
    <property type="entry name" value="NAD(P)-binding Rossmann-fold domains"/>
    <property type="match status" value="1"/>
</dbReference>
<accession>B6JN89</accession>
<evidence type="ECO:0000255" key="1">
    <source>
        <dbReference type="HAMAP-Rule" id="MF_00222"/>
    </source>
</evidence>
<organism>
    <name type="scientific">Helicobacter pylori (strain P12)</name>
    <dbReference type="NCBI Taxonomy" id="570508"/>
    <lineage>
        <taxon>Bacteria</taxon>
        <taxon>Pseudomonadati</taxon>
        <taxon>Campylobacterota</taxon>
        <taxon>Epsilonproteobacteria</taxon>
        <taxon>Campylobacterales</taxon>
        <taxon>Helicobacteraceae</taxon>
        <taxon>Helicobacter</taxon>
    </lineage>
</organism>
<protein>
    <recommendedName>
        <fullName evidence="1">Shikimate dehydrogenase (NADP(+))</fullName>
        <shortName evidence="1">SDH</shortName>
        <ecNumber evidence="1">1.1.1.25</ecNumber>
    </recommendedName>
</protein>
<feature type="chain" id="PRO_1000100124" description="Shikimate dehydrogenase (NADP(+))">
    <location>
        <begin position="1"/>
        <end position="263"/>
    </location>
</feature>
<feature type="active site" description="Proton acceptor" evidence="1">
    <location>
        <position position="69"/>
    </location>
</feature>
<feature type="binding site" evidence="1">
    <location>
        <begin position="16"/>
        <end position="18"/>
    </location>
    <ligand>
        <name>shikimate</name>
        <dbReference type="ChEBI" id="CHEBI:36208"/>
    </ligand>
</feature>
<feature type="binding site" evidence="1">
    <location>
        <position position="65"/>
    </location>
    <ligand>
        <name>shikimate</name>
        <dbReference type="ChEBI" id="CHEBI:36208"/>
    </ligand>
</feature>
<feature type="binding site" evidence="1">
    <location>
        <position position="90"/>
    </location>
    <ligand>
        <name>shikimate</name>
        <dbReference type="ChEBI" id="CHEBI:36208"/>
    </ligand>
</feature>
<feature type="binding site" evidence="1">
    <location>
        <position position="105"/>
    </location>
    <ligand>
        <name>shikimate</name>
        <dbReference type="ChEBI" id="CHEBI:36208"/>
    </ligand>
</feature>
<feature type="binding site" evidence="1">
    <location>
        <begin position="125"/>
        <end position="129"/>
    </location>
    <ligand>
        <name>NADP(+)</name>
        <dbReference type="ChEBI" id="CHEBI:58349"/>
    </ligand>
</feature>
<feature type="binding site" evidence="1">
    <location>
        <position position="208"/>
    </location>
    <ligand>
        <name>NADP(+)</name>
        <dbReference type="ChEBI" id="CHEBI:58349"/>
    </ligand>
</feature>
<feature type="binding site" evidence="1">
    <location>
        <position position="210"/>
    </location>
    <ligand>
        <name>shikimate</name>
        <dbReference type="ChEBI" id="CHEBI:36208"/>
    </ligand>
</feature>
<feature type="binding site" evidence="1">
    <location>
        <position position="230"/>
    </location>
    <ligand>
        <name>NADP(+)</name>
        <dbReference type="ChEBI" id="CHEBI:58349"/>
    </ligand>
</feature>
<comment type="function">
    <text evidence="1">Involved in the biosynthesis of the chorismate, which leads to the biosynthesis of aromatic amino acids. Catalyzes the reversible NADPH linked reduction of 3-dehydroshikimate (DHSA) to yield shikimate (SA).</text>
</comment>
<comment type="catalytic activity">
    <reaction evidence="1">
        <text>shikimate + NADP(+) = 3-dehydroshikimate + NADPH + H(+)</text>
        <dbReference type="Rhea" id="RHEA:17737"/>
        <dbReference type="ChEBI" id="CHEBI:15378"/>
        <dbReference type="ChEBI" id="CHEBI:16630"/>
        <dbReference type="ChEBI" id="CHEBI:36208"/>
        <dbReference type="ChEBI" id="CHEBI:57783"/>
        <dbReference type="ChEBI" id="CHEBI:58349"/>
        <dbReference type="EC" id="1.1.1.25"/>
    </reaction>
</comment>
<comment type="pathway">
    <text evidence="1">Metabolic intermediate biosynthesis; chorismate biosynthesis; chorismate from D-erythrose 4-phosphate and phosphoenolpyruvate: step 4/7.</text>
</comment>
<comment type="subunit">
    <text evidence="1">Homodimer.</text>
</comment>
<comment type="similarity">
    <text evidence="1">Belongs to the shikimate dehydrogenase family.</text>
</comment>
<proteinExistence type="inferred from homology"/>